<proteinExistence type="evidence at protein level"/>
<accession>A7X672</accession>
<protein>
    <recommendedName>
        <fullName evidence="7">Inositol-tetrakisphosphate 1-kinase 3</fullName>
        <shortName evidence="7">GmItpk3</shortName>
        <ecNumber evidence="6">2.7.1.134</ecNumber>
    </recommendedName>
    <alternativeName>
        <fullName evidence="3">Inositol 1,3,4-trisphosphate 5/6-kinase 3</fullName>
        <shortName evidence="3">Inositol-triphosphate 5/6-kinase 3</shortName>
        <shortName evidence="3">Ins(1,3,4)P(3) 5/6-kinase 3</shortName>
        <ecNumber evidence="6">2.7.1.159</ecNumber>
    </alternativeName>
</protein>
<feature type="chain" id="PRO_0000457406" description="Inositol-tetrakisphosphate 1-kinase 3">
    <location>
        <begin position="1"/>
        <end position="354"/>
    </location>
</feature>
<feature type="domain" description="ATP-grasp" evidence="5">
    <location>
        <begin position="144"/>
        <end position="352"/>
    </location>
</feature>
<feature type="region of interest" description="Catalytic specificity elements (CSE)" evidence="1">
    <location>
        <begin position="250"/>
        <end position="276"/>
    </location>
</feature>
<feature type="binding site" evidence="4">
    <location>
        <position position="57"/>
    </location>
    <ligand>
        <name>1D-myo-inositol 6-phosphate</name>
        <dbReference type="ChEBI" id="CHEBI:64841"/>
    </ligand>
</feature>
<feature type="binding site" evidence="4">
    <location>
        <position position="99"/>
    </location>
    <ligand>
        <name>1D-myo-inositol 6-phosphate</name>
        <dbReference type="ChEBI" id="CHEBI:64841"/>
    </ligand>
</feature>
<feature type="binding site" evidence="2">
    <location>
        <position position="134"/>
    </location>
    <ligand>
        <name>ATP</name>
        <dbReference type="ChEBI" id="CHEBI:30616"/>
    </ligand>
</feature>
<feature type="binding site" evidence="2">
    <location>
        <position position="184"/>
    </location>
    <ligand>
        <name>ATP</name>
        <dbReference type="ChEBI" id="CHEBI:30616"/>
    </ligand>
</feature>
<feature type="binding site" evidence="4">
    <location>
        <position position="190"/>
    </location>
    <ligand>
        <name>1D-myo-inositol 6-phosphate</name>
        <dbReference type="ChEBI" id="CHEBI:64841"/>
    </ligand>
</feature>
<feature type="binding site" evidence="4">
    <location>
        <position position="195"/>
    </location>
    <ligand>
        <name>1D-myo-inositol 6-phosphate</name>
        <dbReference type="ChEBI" id="CHEBI:64841"/>
    </ligand>
</feature>
<feature type="binding site" evidence="4">
    <location>
        <position position="195"/>
    </location>
    <ligand>
        <name>ATP</name>
        <dbReference type="ChEBI" id="CHEBI:30616"/>
    </ligand>
</feature>
<feature type="binding site" evidence="4">
    <location>
        <position position="216"/>
    </location>
    <ligand>
        <name>ATP</name>
        <dbReference type="ChEBI" id="CHEBI:30616"/>
    </ligand>
</feature>
<feature type="binding site" evidence="4">
    <location>
        <position position="219"/>
    </location>
    <ligand>
        <name>ATP</name>
        <dbReference type="ChEBI" id="CHEBI:30616"/>
    </ligand>
</feature>
<feature type="binding site" evidence="4">
    <location>
        <position position="227"/>
    </location>
    <ligand>
        <name>1D-myo-inositol 6-phosphate</name>
        <dbReference type="ChEBI" id="CHEBI:64841"/>
    </ligand>
</feature>
<feature type="binding site" evidence="3">
    <location>
        <position position="229"/>
    </location>
    <ligand>
        <name>1D-myo-inositol 6-phosphate</name>
        <dbReference type="ChEBI" id="CHEBI:64841"/>
    </ligand>
</feature>
<feature type="binding site" evidence="2">
    <location>
        <position position="242"/>
    </location>
    <ligand>
        <name>ATP</name>
        <dbReference type="ChEBI" id="CHEBI:30616"/>
    </ligand>
</feature>
<feature type="binding site" evidence="3">
    <location>
        <position position="305"/>
    </location>
    <ligand>
        <name>1D-myo-inositol 6-phosphate</name>
        <dbReference type="ChEBI" id="CHEBI:64841"/>
    </ligand>
</feature>
<feature type="binding site" evidence="2">
    <location>
        <position position="307"/>
    </location>
    <ligand>
        <name>Mg(2+)</name>
        <dbReference type="ChEBI" id="CHEBI:18420"/>
        <label>1</label>
    </ligand>
</feature>
<feature type="binding site" evidence="4">
    <location>
        <position position="321"/>
    </location>
    <ligand>
        <name>ATP</name>
        <dbReference type="ChEBI" id="CHEBI:30616"/>
    </ligand>
</feature>
<feature type="binding site" evidence="4">
    <location>
        <position position="322"/>
    </location>
    <ligand>
        <name>ATP</name>
        <dbReference type="ChEBI" id="CHEBI:30616"/>
    </ligand>
</feature>
<feature type="binding site" evidence="2">
    <location>
        <position position="322"/>
    </location>
    <ligand>
        <name>Mg(2+)</name>
        <dbReference type="ChEBI" id="CHEBI:18420"/>
        <label>1</label>
    </ligand>
</feature>
<feature type="binding site" evidence="2">
    <location>
        <position position="322"/>
    </location>
    <ligand>
        <name>Mg(2+)</name>
        <dbReference type="ChEBI" id="CHEBI:18420"/>
        <label>2</label>
    </ligand>
</feature>
<feature type="binding site" evidence="4">
    <location>
        <position position="324"/>
    </location>
    <ligand>
        <name>1D-myo-inositol 6-phosphate</name>
        <dbReference type="ChEBI" id="CHEBI:64841"/>
    </ligand>
</feature>
<feature type="binding site" evidence="4">
    <location>
        <position position="324"/>
    </location>
    <ligand>
        <name>ATP</name>
        <dbReference type="ChEBI" id="CHEBI:30616"/>
    </ligand>
</feature>
<feature type="binding site" evidence="2">
    <location>
        <position position="324"/>
    </location>
    <ligand>
        <name>Mg(2+)</name>
        <dbReference type="ChEBI" id="CHEBI:18420"/>
        <label>2</label>
    </ligand>
</feature>
<feature type="binding site" evidence="3">
    <location>
        <position position="328"/>
    </location>
    <ligand>
        <name>1D-myo-inositol 6-phosphate</name>
        <dbReference type="ChEBI" id="CHEBI:64841"/>
    </ligand>
</feature>
<feature type="binding site" evidence="3">
    <location>
        <position position="331"/>
    </location>
    <ligand>
        <name>1D-myo-inositol 6-phosphate</name>
        <dbReference type="ChEBI" id="CHEBI:64841"/>
    </ligand>
</feature>
<dbReference type="EC" id="2.7.1.134" evidence="6"/>
<dbReference type="EC" id="2.7.1.159" evidence="6"/>
<dbReference type="EMBL" id="EU033960">
    <property type="protein sequence ID" value="ABU93833.1"/>
    <property type="molecule type" value="mRNA"/>
</dbReference>
<dbReference type="EMBL" id="KJ413159">
    <property type="protein sequence ID" value="AHX24357.1"/>
    <property type="molecule type" value="mRNA"/>
</dbReference>
<dbReference type="EMBL" id="CM000839">
    <property type="protein sequence ID" value="KRH52831.1"/>
    <property type="molecule type" value="Genomic_DNA"/>
</dbReference>
<dbReference type="EMBL" id="CM000839">
    <property type="protein sequence ID" value="KRH52832.1"/>
    <property type="molecule type" value="Genomic_DNA"/>
</dbReference>
<dbReference type="EMBL" id="CM000839">
    <property type="protein sequence ID" value="KRH52833.1"/>
    <property type="molecule type" value="Genomic_DNA"/>
</dbReference>
<dbReference type="EMBL" id="CM000839">
    <property type="protein sequence ID" value="KRH52834.1"/>
    <property type="molecule type" value="Genomic_DNA"/>
</dbReference>
<dbReference type="RefSeq" id="NP_001237484.1">
    <property type="nucleotide sequence ID" value="NM_001250555.1"/>
</dbReference>
<dbReference type="RefSeq" id="XP_006580904.1">
    <property type="nucleotide sequence ID" value="XM_006580841.4"/>
</dbReference>
<dbReference type="SMR" id="A7X672"/>
<dbReference type="FunCoup" id="A7X672">
    <property type="interactions" value="1612"/>
</dbReference>
<dbReference type="STRING" id="3847.A7X672"/>
<dbReference type="PaxDb" id="3847-GLYMA06G09430.4"/>
<dbReference type="PRIDE" id="A7X672"/>
<dbReference type="EnsemblPlants" id="KRH52831">
    <property type="protein sequence ID" value="KRH52831"/>
    <property type="gene ID" value="GLYMA_06G089800"/>
</dbReference>
<dbReference type="EnsemblPlants" id="KRH52832">
    <property type="protein sequence ID" value="KRH52832"/>
    <property type="gene ID" value="GLYMA_06G089800"/>
</dbReference>
<dbReference type="EnsemblPlants" id="KRH52833">
    <property type="protein sequence ID" value="KRH52833"/>
    <property type="gene ID" value="GLYMA_06G089800"/>
</dbReference>
<dbReference type="EnsemblPlants" id="KRH52834">
    <property type="protein sequence ID" value="KRH52834"/>
    <property type="gene ID" value="GLYMA_06G089800"/>
</dbReference>
<dbReference type="GeneID" id="100127409"/>
<dbReference type="Gramene" id="KRH52831">
    <property type="protein sequence ID" value="KRH52831"/>
    <property type="gene ID" value="GLYMA_06G089800"/>
</dbReference>
<dbReference type="Gramene" id="KRH52832">
    <property type="protein sequence ID" value="KRH52832"/>
    <property type="gene ID" value="GLYMA_06G089800"/>
</dbReference>
<dbReference type="Gramene" id="KRH52833">
    <property type="protein sequence ID" value="KRH52833"/>
    <property type="gene ID" value="GLYMA_06G089800"/>
</dbReference>
<dbReference type="Gramene" id="KRH52834">
    <property type="protein sequence ID" value="KRH52834"/>
    <property type="gene ID" value="GLYMA_06G089800"/>
</dbReference>
<dbReference type="KEGG" id="gmx:100127409"/>
<dbReference type="eggNOG" id="ENOG502QQS1">
    <property type="taxonomic scope" value="Eukaryota"/>
</dbReference>
<dbReference type="HOGENOM" id="CLU_041857_0_0_1"/>
<dbReference type="InParanoid" id="A7X672"/>
<dbReference type="OMA" id="QHLYNRQ"/>
<dbReference type="OrthoDB" id="25308at2759"/>
<dbReference type="Proteomes" id="UP000008827">
    <property type="component" value="Chromosome 6"/>
</dbReference>
<dbReference type="GO" id="GO:0005524">
    <property type="term" value="F:ATP binding"/>
    <property type="evidence" value="ECO:0007669"/>
    <property type="project" value="UniProtKB-KW"/>
</dbReference>
<dbReference type="GO" id="GO:0052726">
    <property type="term" value="F:inositol-1,3,4-trisphosphate 5-kinase activity"/>
    <property type="evidence" value="ECO:0000314"/>
    <property type="project" value="UniProtKB"/>
</dbReference>
<dbReference type="GO" id="GO:0052725">
    <property type="term" value="F:inositol-1,3,4-trisphosphate 6-kinase activity"/>
    <property type="evidence" value="ECO:0000314"/>
    <property type="project" value="UniProtKB"/>
</dbReference>
<dbReference type="GO" id="GO:0047325">
    <property type="term" value="F:inositol-3,4,5,6-tetrakisphosphate 1-kinase activity"/>
    <property type="evidence" value="ECO:0000314"/>
    <property type="project" value="UniProtKB"/>
</dbReference>
<dbReference type="GO" id="GO:0052835">
    <property type="term" value="F:inositol-3,4,6-trisphosphate 1-kinase activity"/>
    <property type="evidence" value="ECO:0000314"/>
    <property type="project" value="UniProtKB"/>
</dbReference>
<dbReference type="GO" id="GO:0000287">
    <property type="term" value="F:magnesium ion binding"/>
    <property type="evidence" value="ECO:0007669"/>
    <property type="project" value="InterPro"/>
</dbReference>
<dbReference type="GO" id="GO:0032957">
    <property type="term" value="P:inositol trisphosphate metabolic process"/>
    <property type="evidence" value="ECO:0007669"/>
    <property type="project" value="InterPro"/>
</dbReference>
<dbReference type="FunFam" id="3.30.470.20:FF:000047">
    <property type="entry name" value="Inositol-tetrakisphosphate 1-kinase 4"/>
    <property type="match status" value="1"/>
</dbReference>
<dbReference type="Gene3D" id="3.30.470.20">
    <property type="entry name" value="ATP-grasp fold, B domain"/>
    <property type="match status" value="1"/>
</dbReference>
<dbReference type="InterPro" id="IPR008656">
    <property type="entry name" value="Inositol_tetrakis-P_1-kinase"/>
</dbReference>
<dbReference type="InterPro" id="IPR040464">
    <property type="entry name" value="InsP(3)kin_ATP-grasp"/>
</dbReference>
<dbReference type="InterPro" id="IPR041429">
    <property type="entry name" value="ITPK1_N"/>
</dbReference>
<dbReference type="PANTHER" id="PTHR14217">
    <property type="entry name" value="INOSITOL-TETRAKISPHOSPHATE 1-KINASE"/>
    <property type="match status" value="1"/>
</dbReference>
<dbReference type="PANTHER" id="PTHR14217:SF39">
    <property type="entry name" value="INOSITOL-TETRAKISPHOSPHATE 1-KINASE 3"/>
    <property type="match status" value="1"/>
</dbReference>
<dbReference type="Pfam" id="PF05770">
    <property type="entry name" value="Ins134_P3_kin"/>
    <property type="match status" value="1"/>
</dbReference>
<dbReference type="Pfam" id="PF17927">
    <property type="entry name" value="Ins134_P3_kin_N"/>
    <property type="match status" value="1"/>
</dbReference>
<dbReference type="PIRSF" id="PIRSF038186">
    <property type="entry name" value="ITPK"/>
    <property type="match status" value="1"/>
</dbReference>
<dbReference type="SUPFAM" id="SSF56059">
    <property type="entry name" value="Glutathione synthetase ATP-binding domain-like"/>
    <property type="match status" value="1"/>
</dbReference>
<comment type="function">
    <text evidence="6">Kinase that can phosphorylate various inositol polyphosphate such as Ins(3,4,5,6)P4, Ins(3,4,6)P3 and Ins(1,3,4)P3 (PubMed:18474240). May participate in an inositol lipid-independent pathway of InsP6 synthesis (PubMed:18474240).</text>
</comment>
<comment type="catalytic activity">
    <reaction evidence="6">
        <text>1D-myo-inositol 1,3,4-trisphosphate + ATP = 1D-myo-inositol 1,3,4,5-tetrakisphosphate + ADP + H(+)</text>
        <dbReference type="Rhea" id="RHEA:13253"/>
        <dbReference type="ChEBI" id="CHEBI:15378"/>
        <dbReference type="ChEBI" id="CHEBI:30616"/>
        <dbReference type="ChEBI" id="CHEBI:57895"/>
        <dbReference type="ChEBI" id="CHEBI:58414"/>
        <dbReference type="ChEBI" id="CHEBI:456216"/>
        <dbReference type="EC" id="2.7.1.159"/>
    </reaction>
    <physiologicalReaction direction="left-to-right" evidence="6">
        <dbReference type="Rhea" id="RHEA:13254"/>
    </physiologicalReaction>
</comment>
<comment type="catalytic activity">
    <reaction evidence="6">
        <text>1D-myo-inositol 1,3,4-trisphosphate + ATP = 1D-myo-inositol 1,3,4,6-tetrakisphosphate + ADP + H(+)</text>
        <dbReference type="Rhea" id="RHEA:20940"/>
        <dbReference type="ChEBI" id="CHEBI:15378"/>
        <dbReference type="ChEBI" id="CHEBI:30616"/>
        <dbReference type="ChEBI" id="CHEBI:57660"/>
        <dbReference type="ChEBI" id="CHEBI:58414"/>
        <dbReference type="ChEBI" id="CHEBI:456216"/>
        <dbReference type="EC" id="2.7.1.159"/>
    </reaction>
    <physiologicalReaction direction="left-to-right" evidence="6">
        <dbReference type="Rhea" id="RHEA:20941"/>
    </physiologicalReaction>
</comment>
<comment type="catalytic activity">
    <reaction evidence="6">
        <text>1D-myo-inositol 3,4,5,6-tetrakisphosphate + ATP = 1D-myo-inositol 1,3,4,5,6-pentakisphosphate + ADP + H(+)</text>
        <dbReference type="Rhea" id="RHEA:12452"/>
        <dbReference type="ChEBI" id="CHEBI:15378"/>
        <dbReference type="ChEBI" id="CHEBI:30616"/>
        <dbReference type="ChEBI" id="CHEBI:57539"/>
        <dbReference type="ChEBI" id="CHEBI:57733"/>
        <dbReference type="ChEBI" id="CHEBI:456216"/>
        <dbReference type="EC" id="2.7.1.134"/>
    </reaction>
    <physiologicalReaction direction="left-to-right" evidence="6">
        <dbReference type="Rhea" id="RHEA:12453"/>
    </physiologicalReaction>
    <physiologicalReaction direction="right-to-left" evidence="3">
        <dbReference type="Rhea" id="RHEA:12454"/>
    </physiologicalReaction>
</comment>
<comment type="catalytic activity">
    <reaction evidence="6">
        <text>1D-myo-inositol 3,4,6-trisphosphate + ATP = 1D-myo-inositol 1,3,4,6-tetrakisphosphate + ADP + H(+)</text>
        <dbReference type="Rhea" id="RHEA:70287"/>
        <dbReference type="ChEBI" id="CHEBI:15378"/>
        <dbReference type="ChEBI" id="CHEBI:30616"/>
        <dbReference type="ChEBI" id="CHEBI:57660"/>
        <dbReference type="ChEBI" id="CHEBI:189099"/>
        <dbReference type="ChEBI" id="CHEBI:456216"/>
    </reaction>
    <physiologicalReaction direction="left-to-right" evidence="6">
        <dbReference type="Rhea" id="RHEA:70288"/>
    </physiologicalReaction>
</comment>
<comment type="cofactor">
    <cofactor evidence="2">
        <name>Mg(2+)</name>
        <dbReference type="ChEBI" id="CHEBI:18420"/>
    </cofactor>
    <text evidence="2">Binds 2 magnesium ions per subunit.</text>
</comment>
<comment type="biophysicochemical properties">
    <kinetics>
        <KM evidence="6">43.4 uM for Ins(1,3,4)P3</KM>
        <KM evidence="6">1.05 uM for Ins(3,4,5,6)P4</KM>
        <Vmax evidence="6">0.86 umol/min/mg enzyme with Ins(1,3,4)P3 as substrate</Vmax>
        <Vmax evidence="6">0.22 umol/min/mg enzyme with Ins(3,4,5,6)P4 as substrate</Vmax>
    </kinetics>
</comment>
<comment type="subunit">
    <text evidence="2">Monomer.</text>
</comment>
<comment type="tissue specificity">
    <text evidence="6">Seed specific.</text>
</comment>
<comment type="developmental stage">
    <text evidence="6">In developing seeds, mostly expressed in early stages.</text>
</comment>
<comment type="similarity">
    <text evidence="8">Belongs to the ITPK1 family.</text>
</comment>
<sequence length="354" mass="40035">MRLREEVACKNDDVCEKEEVVIENDVTVAQNHWCPVVNAGFSSPKRVVVVGYALTTKKIKSFLQPKLEGLARNKGILFVAIDHNRPLSDQGPFDIVLHKLSGKEWRQVLEDYRLSHPEVTVLDPPDAIQHLRNRQYMLQAVADMNLSDSYGIVGVPRQLVIKRDALAIPELVNKAGLTLPLVAKPLVADGSAKSHELSLAYEHFSLQNLEPPLVLQEFVNHGGVLFKVYIVGDAIKVVRRFSLPDVSKWELSKDAGIYRFPRVSCAAASADDADLDPTVAELPPRPLLEKLAKELRWRLGLRLFNLDIIREYGTRNHFYVIDINYFPGYGKMPEYEHIFTDFLLSLGQGKYKKK</sequence>
<keyword id="KW-0067">ATP-binding</keyword>
<keyword id="KW-0418">Kinase</keyword>
<keyword id="KW-0460">Magnesium</keyword>
<keyword id="KW-0479">Metal-binding</keyword>
<keyword id="KW-0547">Nucleotide-binding</keyword>
<keyword id="KW-1185">Reference proteome</keyword>
<keyword id="KW-0808">Transferase</keyword>
<name>ITPK3_SOYBN</name>
<organism>
    <name type="scientific">Glycine max</name>
    <name type="common">Soybean</name>
    <name type="synonym">Glycine hispida</name>
    <dbReference type="NCBI Taxonomy" id="3847"/>
    <lineage>
        <taxon>Eukaryota</taxon>
        <taxon>Viridiplantae</taxon>
        <taxon>Streptophyta</taxon>
        <taxon>Embryophyta</taxon>
        <taxon>Tracheophyta</taxon>
        <taxon>Spermatophyta</taxon>
        <taxon>Magnoliopsida</taxon>
        <taxon>eudicotyledons</taxon>
        <taxon>Gunneridae</taxon>
        <taxon>Pentapetalae</taxon>
        <taxon>rosids</taxon>
        <taxon>fabids</taxon>
        <taxon>Fabales</taxon>
        <taxon>Fabaceae</taxon>
        <taxon>Papilionoideae</taxon>
        <taxon>50 kb inversion clade</taxon>
        <taxon>NPAAA clade</taxon>
        <taxon>indigoferoid/millettioid clade</taxon>
        <taxon>Phaseoleae</taxon>
        <taxon>Glycine</taxon>
        <taxon>Glycine subgen. Soja</taxon>
    </lineage>
</organism>
<gene>
    <name evidence="7" type="primary">ITPK3</name>
    <name evidence="9" type="ORF">GLYMA_06G089800</name>
</gene>
<reference key="1">
    <citation type="journal article" date="2008" name="FEBS Lett.">
        <title>Metabolic and signaling properties of an Itpk gene family in Glycine max.</title>
        <authorList>
            <person name="Stiles A.R."/>
            <person name="Qian X."/>
            <person name="Shears S.B."/>
            <person name="Grabau E.A."/>
        </authorList>
    </citation>
    <scope>NUCLEOTIDE SEQUENCE [MRNA]</scope>
    <scope>FUNCTION</scope>
    <scope>CATALYTIC ACTIVITY</scope>
    <scope>BIOPHYSICOCHEMICAL PROPERTIES</scope>
    <scope>TISSUE SPECIFICITY</scope>
    <scope>DEVELOPMENTAL STAGE</scope>
</reference>
<reference key="2">
    <citation type="journal article" date="2010" name="Nature">
        <title>Genome sequence of the palaeopolyploid soybean.</title>
        <authorList>
            <person name="Schmutz J."/>
            <person name="Cannon S.B."/>
            <person name="Schlueter J."/>
            <person name="Ma J."/>
            <person name="Mitros T."/>
            <person name="Nelson W."/>
            <person name="Hyten D.L."/>
            <person name="Song Q."/>
            <person name="Thelen J.J."/>
            <person name="Cheng J."/>
            <person name="Xu D."/>
            <person name="Hellsten U."/>
            <person name="May G.D."/>
            <person name="Yu Y."/>
            <person name="Sakurai T."/>
            <person name="Umezawa T."/>
            <person name="Bhattacharyya M.K."/>
            <person name="Sandhu D."/>
            <person name="Valliyodan B."/>
            <person name="Lindquist E."/>
            <person name="Peto M."/>
            <person name="Grant D."/>
            <person name="Shu S."/>
            <person name="Goodstein D."/>
            <person name="Barry K."/>
            <person name="Futrell-Griggs M."/>
            <person name="Abernathy B."/>
            <person name="Du J."/>
            <person name="Tian Z."/>
            <person name="Zhu L."/>
            <person name="Gill N."/>
            <person name="Joshi T."/>
            <person name="Libault M."/>
            <person name="Sethuraman A."/>
            <person name="Zhang X.-C."/>
            <person name="Shinozaki K."/>
            <person name="Nguyen H.T."/>
            <person name="Wing R.A."/>
            <person name="Cregan P."/>
            <person name="Specht J."/>
            <person name="Grimwood J."/>
            <person name="Rokhsar D."/>
            <person name="Stacey G."/>
            <person name="Shoemaker R.C."/>
            <person name="Jackson S.A."/>
        </authorList>
    </citation>
    <scope>NUCLEOTIDE SEQUENCE [LARGE SCALE GENOMIC DNA]</scope>
    <source>
        <strain>cv. Williams 82</strain>
        <tissue>Callus</tissue>
    </source>
</reference>
<evidence type="ECO:0000250" key="1">
    <source>
        <dbReference type="UniProtKB" id="A7X657"/>
    </source>
</evidence>
<evidence type="ECO:0000250" key="2">
    <source>
        <dbReference type="UniProtKB" id="Q13572"/>
    </source>
</evidence>
<evidence type="ECO:0000250" key="3">
    <source>
        <dbReference type="UniProtKB" id="Q84Y01"/>
    </source>
</evidence>
<evidence type="ECO:0000250" key="4">
    <source>
        <dbReference type="UniProtKB" id="Q9XYQ1"/>
    </source>
</evidence>
<evidence type="ECO:0000255" key="5">
    <source>
        <dbReference type="PROSITE-ProRule" id="PRU00409"/>
    </source>
</evidence>
<evidence type="ECO:0000269" key="6">
    <source>
    </source>
</evidence>
<evidence type="ECO:0000303" key="7">
    <source>
    </source>
</evidence>
<evidence type="ECO:0000305" key="8"/>
<evidence type="ECO:0000312" key="9">
    <source>
        <dbReference type="EMBL" id="KRH52831.1"/>
    </source>
</evidence>